<evidence type="ECO:0000255" key="1">
    <source>
        <dbReference type="HAMAP-Rule" id="MF_00405"/>
    </source>
</evidence>
<keyword id="KW-0963">Cytoplasm</keyword>
<keyword id="KW-0275">Fatty acid biosynthesis</keyword>
<keyword id="KW-0276">Fatty acid metabolism</keyword>
<keyword id="KW-0413">Isomerase</keyword>
<keyword id="KW-0444">Lipid biosynthesis</keyword>
<keyword id="KW-0443">Lipid metabolism</keyword>
<keyword id="KW-0456">Lyase</keyword>
<feature type="chain" id="PRO_1000049831" description="3-hydroxydecanoyl-[acyl-carrier-protein] dehydratase">
    <location>
        <begin position="1"/>
        <end position="171"/>
    </location>
</feature>
<feature type="active site" evidence="1">
    <location>
        <position position="71"/>
    </location>
</feature>
<organism>
    <name type="scientific">Sinorhizobium medicae (strain WSM419)</name>
    <name type="common">Ensifer medicae</name>
    <dbReference type="NCBI Taxonomy" id="366394"/>
    <lineage>
        <taxon>Bacteria</taxon>
        <taxon>Pseudomonadati</taxon>
        <taxon>Pseudomonadota</taxon>
        <taxon>Alphaproteobacteria</taxon>
        <taxon>Hyphomicrobiales</taxon>
        <taxon>Rhizobiaceae</taxon>
        <taxon>Sinorhizobium/Ensifer group</taxon>
        <taxon>Sinorhizobium</taxon>
    </lineage>
</organism>
<gene>
    <name evidence="1" type="primary">fabA</name>
    <name type="ordered locus">Smed_3450</name>
</gene>
<name>FABA_SINMW</name>
<comment type="function">
    <text evidence="1">Necessary for the introduction of cis unsaturation into fatty acids. Catalyzes the dehydration of (3R)-3-hydroxydecanoyl-ACP to E-(2)-decenoyl-ACP and then its isomerization to Z-(3)-decenoyl-ACP. Can catalyze the dehydratase reaction for beta-hydroxyacyl-ACPs with saturated chain lengths up to 16:0, being most active on intermediate chain length.</text>
</comment>
<comment type="catalytic activity">
    <reaction evidence="1">
        <text>a (3R)-hydroxyacyl-[ACP] = a (2E)-enoyl-[ACP] + H2O</text>
        <dbReference type="Rhea" id="RHEA:13097"/>
        <dbReference type="Rhea" id="RHEA-COMP:9925"/>
        <dbReference type="Rhea" id="RHEA-COMP:9945"/>
        <dbReference type="ChEBI" id="CHEBI:15377"/>
        <dbReference type="ChEBI" id="CHEBI:78784"/>
        <dbReference type="ChEBI" id="CHEBI:78827"/>
        <dbReference type="EC" id="4.2.1.59"/>
    </reaction>
</comment>
<comment type="catalytic activity">
    <reaction evidence="1">
        <text>(3R)-hydroxydecanoyl-[ACP] = (2E)-decenoyl-[ACP] + H2O</text>
        <dbReference type="Rhea" id="RHEA:41860"/>
        <dbReference type="Rhea" id="RHEA-COMP:9638"/>
        <dbReference type="Rhea" id="RHEA-COMP:9639"/>
        <dbReference type="ChEBI" id="CHEBI:15377"/>
        <dbReference type="ChEBI" id="CHEBI:78466"/>
        <dbReference type="ChEBI" id="CHEBI:78467"/>
    </reaction>
</comment>
<comment type="catalytic activity">
    <reaction evidence="1">
        <text>(2E)-decenoyl-[ACP] = (3Z)-decenoyl-[ACP]</text>
        <dbReference type="Rhea" id="RHEA:23568"/>
        <dbReference type="Rhea" id="RHEA-COMP:9639"/>
        <dbReference type="Rhea" id="RHEA-COMP:9927"/>
        <dbReference type="ChEBI" id="CHEBI:78467"/>
        <dbReference type="ChEBI" id="CHEBI:78798"/>
        <dbReference type="EC" id="5.3.3.14"/>
    </reaction>
</comment>
<comment type="pathway">
    <text evidence="1">Lipid metabolism; fatty acid biosynthesis.</text>
</comment>
<comment type="subunit">
    <text evidence="1">Homodimer.</text>
</comment>
<comment type="subcellular location">
    <subcellularLocation>
        <location evidence="1">Cytoplasm</location>
    </subcellularLocation>
</comment>
<comment type="similarity">
    <text evidence="1">Belongs to the thioester dehydratase family. FabA subfamily.</text>
</comment>
<proteinExistence type="inferred from homology"/>
<sequence>MTTRQSSFSYEEILICGRGEMFGPGNAQLPLPPMLMFNRITDISETGGPHDKGYVRAEFDITPDLWFFPCHFMGDPVMPGCLGLDAMWQLTGFFLGWLGEAGKGRAISTGEVKFTGMVTPKTKLVEYGIDFKRVMRGRLVLGIADGWMKADGETIYKATDLRVGLFQEKAG</sequence>
<reference key="1">
    <citation type="submission" date="2007-06" db="EMBL/GenBank/DDBJ databases">
        <title>Complete sequence of Sinorhizobium medicae WSM419 chromosome.</title>
        <authorList>
            <consortium name="US DOE Joint Genome Institute"/>
            <person name="Copeland A."/>
            <person name="Lucas S."/>
            <person name="Lapidus A."/>
            <person name="Barry K."/>
            <person name="Glavina del Rio T."/>
            <person name="Dalin E."/>
            <person name="Tice H."/>
            <person name="Pitluck S."/>
            <person name="Chain P."/>
            <person name="Malfatti S."/>
            <person name="Shin M."/>
            <person name="Vergez L."/>
            <person name="Schmutz J."/>
            <person name="Larimer F."/>
            <person name="Land M."/>
            <person name="Hauser L."/>
            <person name="Kyrpides N."/>
            <person name="Mikhailova N."/>
            <person name="Reeve W.G."/>
            <person name="Richardson P."/>
        </authorList>
    </citation>
    <scope>NUCLEOTIDE SEQUENCE [LARGE SCALE GENOMIC DNA]</scope>
    <source>
        <strain>WSM419</strain>
    </source>
</reference>
<accession>A6UF38</accession>
<protein>
    <recommendedName>
        <fullName evidence="1">3-hydroxydecanoyl-[acyl-carrier-protein] dehydratase</fullName>
        <ecNumber evidence="1">4.2.1.59</ecNumber>
    </recommendedName>
    <alternativeName>
        <fullName evidence="1">3-hydroxyacyl-[acyl-carrier-protein] dehydratase FabA</fullName>
    </alternativeName>
    <alternativeName>
        <fullName evidence="1">Beta-hydroxydecanoyl thioester dehydrase</fullName>
    </alternativeName>
    <alternativeName>
        <fullName evidence="1">Trans-2-decenoyl-[acyl-carrier-protein] isomerase</fullName>
        <ecNumber evidence="1">5.3.3.14</ecNumber>
    </alternativeName>
</protein>
<dbReference type="EC" id="4.2.1.59" evidence="1"/>
<dbReference type="EC" id="5.3.3.14" evidence="1"/>
<dbReference type="EMBL" id="CP000738">
    <property type="protein sequence ID" value="ABR62268.1"/>
    <property type="molecule type" value="Genomic_DNA"/>
</dbReference>
<dbReference type="RefSeq" id="WP_012067648.1">
    <property type="nucleotide sequence ID" value="NC_009636.1"/>
</dbReference>
<dbReference type="RefSeq" id="YP_001329103.1">
    <property type="nucleotide sequence ID" value="NC_009636.1"/>
</dbReference>
<dbReference type="SMR" id="A6UF38"/>
<dbReference type="STRING" id="366394.Smed_3450"/>
<dbReference type="GeneID" id="61611001"/>
<dbReference type="KEGG" id="smd:Smed_3450"/>
<dbReference type="PATRIC" id="fig|366394.8.peg.6700"/>
<dbReference type="eggNOG" id="COG0764">
    <property type="taxonomic scope" value="Bacteria"/>
</dbReference>
<dbReference type="HOGENOM" id="CLU_097925_0_0_5"/>
<dbReference type="OrthoDB" id="9786735at2"/>
<dbReference type="UniPathway" id="UPA00094"/>
<dbReference type="Proteomes" id="UP000001108">
    <property type="component" value="Chromosome"/>
</dbReference>
<dbReference type="GO" id="GO:0005737">
    <property type="term" value="C:cytoplasm"/>
    <property type="evidence" value="ECO:0007669"/>
    <property type="project" value="UniProtKB-SubCell"/>
</dbReference>
<dbReference type="GO" id="GO:0019171">
    <property type="term" value="F:(3R)-hydroxyacyl-[acyl-carrier-protein] dehydratase activity"/>
    <property type="evidence" value="ECO:0007669"/>
    <property type="project" value="UniProtKB-UniRule"/>
</dbReference>
<dbReference type="GO" id="GO:0034017">
    <property type="term" value="F:trans-2-decenoyl-acyl-carrier-protein isomerase activity"/>
    <property type="evidence" value="ECO:0007669"/>
    <property type="project" value="UniProtKB-UniRule"/>
</dbReference>
<dbReference type="GO" id="GO:0006636">
    <property type="term" value="P:unsaturated fatty acid biosynthetic process"/>
    <property type="evidence" value="ECO:0007669"/>
    <property type="project" value="UniProtKB-UniRule"/>
</dbReference>
<dbReference type="CDD" id="cd01287">
    <property type="entry name" value="FabA"/>
    <property type="match status" value="1"/>
</dbReference>
<dbReference type="Gene3D" id="3.10.129.10">
    <property type="entry name" value="Hotdog Thioesterase"/>
    <property type="match status" value="1"/>
</dbReference>
<dbReference type="HAMAP" id="MF_00405">
    <property type="entry name" value="FabA"/>
    <property type="match status" value="1"/>
</dbReference>
<dbReference type="InterPro" id="IPR010083">
    <property type="entry name" value="FabA"/>
</dbReference>
<dbReference type="InterPro" id="IPR013114">
    <property type="entry name" value="FabA_FabZ"/>
</dbReference>
<dbReference type="InterPro" id="IPR029069">
    <property type="entry name" value="HotDog_dom_sf"/>
</dbReference>
<dbReference type="NCBIfam" id="TIGR01749">
    <property type="entry name" value="fabA"/>
    <property type="match status" value="1"/>
</dbReference>
<dbReference type="NCBIfam" id="NF003509">
    <property type="entry name" value="PRK05174.1"/>
    <property type="match status" value="1"/>
</dbReference>
<dbReference type="PANTHER" id="PTHR30272">
    <property type="entry name" value="3-HYDROXYACYL-[ACYL-CARRIER-PROTEIN] DEHYDRATASE"/>
    <property type="match status" value="1"/>
</dbReference>
<dbReference type="PANTHER" id="PTHR30272:SF8">
    <property type="entry name" value="3-HYDROXYDECANOYL-[ACYL-CARRIER-PROTEIN] DEHYDRATASE"/>
    <property type="match status" value="1"/>
</dbReference>
<dbReference type="Pfam" id="PF07977">
    <property type="entry name" value="FabA"/>
    <property type="match status" value="1"/>
</dbReference>
<dbReference type="SUPFAM" id="SSF54637">
    <property type="entry name" value="Thioesterase/thiol ester dehydrase-isomerase"/>
    <property type="match status" value="1"/>
</dbReference>